<sequence>MMILKSFIPGNLISLYMTIINSVVMVGLYYGFLTTLSIGPSYIFLLRARFMEEGEEGTEKRVSATTGFIAGQLMMFISIYYVPLHLALGKPHTITVLALPYLLFHFFWNNHKDFFDHRRPTRNSMRNLSIQCVFLNNLIIQLFNHFILPSSMLARLVNIYMFRCNNNMLFVTSSFVGWLIGHILLMKWVGLVLVWIQQNNLIRSNVLIRSNKYLVSEFRNSMARIFSILLFITCVYYLGRIPSPILTKKLKGISEPEEVGESEEERNIEIETISEGGGANQKQGTEENTSSSLFSEEEVDPSKETEKLRVTGKKKKKIKGEFHFRFKETYYKNRPVYETSYLDGNQESSKLEILKKKEDKYLLWIEKPLVTLLFDSKRWNRPLRYIKNDRVENAIKNEMSQYFFYTCQSDGKEKISFTYPPSLATFGEMIQKKIYFFTPEKWFSDELYTDWSFINELKRRNLSKEFIKRVESLDKESFDLGILEKRTRFSNNETKREYLPKLYDPFLHGPYRGRIKKWGSPLSINQTYKKKNTDPFWINKIHALLLTTDYHDLEQTLDTLNIKSLATEKELSLLTLTEDEQGNIDSEDRVKILKFLFNIVITNPNNQTIRKKSIGIKEISKKVPRWSYKLIDDLEQQEGENEENVTAEHEIRSRKSKRVVIFTNNQANADTYTNTKDANDPDQTDEVALIRYSQQSDFRRDIIKGSMRAQRRKTITWELFQANVHSPLFLDRVDKPLFFSFDISGPLKRISRNWICKNKESKISDYTEKKIEKKDEAKREKYKREEKMRIEIAEAWDSLLLAQVIRGSVLITQSILRKYIILPSLIIVKNIARMLLFQFPEWSEDLTDWNREMHVKCTYNGVQLSETEFPKNWLTDGIQIKILFPFCLKPWHRFKLQPSHKDPMKKKKGQKNDFCFLTVWGMETELPFGSPRKRRSFFEPIFKELKKKIKKWKTKCFIALTILKEKTKLFRKASKETKKWITQSILFLKGIIKELSKINPIPFFGLREPYELGETKKDSIISNKMIHKSSLQIQSMAWTNYSLTEKKIKDLTKRTNTIKNQIQKILIIKDKKNEFLTQEINSSSNKISYQDKILESSKKFWQIVKRRNIRLIRKFYFFINFFIEKIYMDILLYIINIPRTNTQLFLESTKKMIENFIHNNEANQERINKTTKNTTHFISTIKTSLSSLSNISIRNKNEKAFCDLSSLSQAYVFYKLSQTQVISFYKFKPILQYHGTSLFLKNEIKDYFEERGVSHSRLRHHYGLRQKIVWHSGMNEWKNWLRSRYQYDLVQNRWLKLGPGQWRNRVNQHYLAQNKHLTKWDSDEKERLIHYEKKNDFQANSLLTQEYKLNQEQKYKKSNFKKHYGYDFLSYKSINYQDKRDPYAYGSPFQVNKREESSYHYNMDKQNFFDTLRDIPIHNYLGEGDILDAMGNFSHRKFFNWRILDFCLRNKVDIESWVDTSTKSKKNIKTVVKNYQIIDKMDLFYFTIYQDQESNPSNKKGSHFDWMGLNEEILSHPIPNLELWFFPEFVLLYNAYKVKPWIIPIKLLLFNFNGNRNINQNIIENKKRDSLIAPNEKQIIGLENRNQEEKEPIGEGGLVSDAQKQGNFKSVLSNQEKDVEEDYDKSDKKKRRKKKQYKSNTEAELDFFLKRYLRFQLRWDDSLNQRIINNIKVYCLLLRLINPNEIVISSIQRGEMNLDILMIQKDLTLRELMKKGILIIDPVRLSVKNDGQFILYQTISILLVHKNKHQINQRYQEKNYIDKNHFYEFIARHQKMTENKDKNHYDLFVPENILSPNHRRELRIRISFNSRDKNGMHRNAVFLNNVKNCGQVLTKNKHLDSDKKKLIKLKFFLWPNYRLEDLACMNRYWFNTNNGSRFSMIRIRMYPRLKIR</sequence>
<evidence type="ECO:0000250" key="1">
    <source>
        <dbReference type="UniProtKB" id="P56785"/>
    </source>
</evidence>
<evidence type="ECO:0000255" key="2"/>
<evidence type="ECO:0000256" key="3">
    <source>
        <dbReference type="SAM" id="MobiDB-lite"/>
    </source>
</evidence>
<evidence type="ECO:0000305" key="4"/>
<geneLocation type="chloroplast"/>
<gene>
    <name evidence="1" type="primary">TIC214</name>
    <name type="synonym">ycf1</name>
</gene>
<feature type="chain" id="PRO_0000262609" description="Protein TIC 214">
    <location>
        <begin position="1"/>
        <end position="1892"/>
    </location>
</feature>
<feature type="transmembrane region" description="Helical" evidence="2">
    <location>
        <begin position="12"/>
        <end position="32"/>
    </location>
</feature>
<feature type="transmembrane region" description="Helical" evidence="2">
    <location>
        <begin position="68"/>
        <end position="88"/>
    </location>
</feature>
<feature type="transmembrane region" description="Helical" evidence="2">
    <location>
        <begin position="89"/>
        <end position="109"/>
    </location>
</feature>
<feature type="transmembrane region" description="Helical" evidence="2">
    <location>
        <begin position="128"/>
        <end position="148"/>
    </location>
</feature>
<feature type="transmembrane region" description="Helical" evidence="2">
    <location>
        <begin position="176"/>
        <end position="196"/>
    </location>
</feature>
<feature type="transmembrane region" description="Helical" evidence="2">
    <location>
        <begin position="225"/>
        <end position="245"/>
    </location>
</feature>
<feature type="transmembrane region" description="Helical" evidence="2">
    <location>
        <begin position="1115"/>
        <end position="1135"/>
    </location>
</feature>
<feature type="region of interest" description="Disordered" evidence="3">
    <location>
        <begin position="256"/>
        <end position="299"/>
    </location>
</feature>
<feature type="region of interest" description="Disordered" evidence="3">
    <location>
        <begin position="1613"/>
        <end position="1636"/>
    </location>
</feature>
<feature type="compositionally biased region" description="Acidic residues" evidence="3">
    <location>
        <begin position="256"/>
        <end position="266"/>
    </location>
</feature>
<feature type="compositionally biased region" description="Polar residues" evidence="3">
    <location>
        <begin position="280"/>
        <end position="294"/>
    </location>
</feature>
<feature type="sequence conflict" description="In Ref. 2; AAV48874." evidence="4" ref="2">
    <original>GPGQ</original>
    <variation>IRGK</variation>
    <location>
        <begin position="1298"/>
        <end position="1301"/>
    </location>
</feature>
<feature type="sequence conflict" description="In Ref. 2; AAV48874." evidence="4" ref="2">
    <original>V</original>
    <variation>G</variation>
    <location>
        <position position="1472"/>
    </location>
</feature>
<feature type="sequence conflict" description="In Ref. 2; AAV48874." evidence="4" ref="2">
    <original>YFTIYQDQESNPSNKKGS</original>
    <variation>ISQFIKIKKATHPIKKER</variation>
    <location>
        <begin position="1485"/>
        <end position="1502"/>
    </location>
</feature>
<feature type="sequence conflict" description="In Ref. 2; AAV48874." evidence="4" ref="2">
    <original>TEAEL</original>
    <variation>AVIIN</variation>
    <location>
        <begin position="1641"/>
        <end position="1645"/>
    </location>
</feature>
<protein>
    <recommendedName>
        <fullName evidence="1">Protein TIC 214</fullName>
    </recommendedName>
    <alternativeName>
        <fullName evidence="1">Translocon at the inner envelope membrane of chloroplasts 214</fullName>
        <shortName evidence="1">AtTIC214</shortName>
    </alternativeName>
</protein>
<name>TI214_GOSHI</name>
<proteinExistence type="inferred from homology"/>
<dbReference type="EMBL" id="DQ345959">
    <property type="protein sequence ID" value="ABC73674.1"/>
    <property type="molecule type" value="Genomic_DNA"/>
</dbReference>
<dbReference type="EMBL" id="AY800381">
    <property type="protein sequence ID" value="AAV48874.1"/>
    <property type="molecule type" value="Genomic_DNA"/>
</dbReference>
<dbReference type="RefSeq" id="YP_538982.1">
    <property type="nucleotide sequence ID" value="NC_007944.1"/>
</dbReference>
<dbReference type="GeneID" id="3989233"/>
<dbReference type="KEGG" id="ghi:3989233"/>
<dbReference type="OrthoDB" id="71881at41938"/>
<dbReference type="Proteomes" id="UP000189702">
    <property type="component" value="Chloroplast Pltd"/>
</dbReference>
<dbReference type="GO" id="GO:0009706">
    <property type="term" value="C:chloroplast inner membrane"/>
    <property type="evidence" value="ECO:0007669"/>
    <property type="project" value="UniProtKB-SubCell"/>
</dbReference>
<dbReference type="GO" id="GO:0015031">
    <property type="term" value="P:protein transport"/>
    <property type="evidence" value="ECO:0007669"/>
    <property type="project" value="UniProtKB-KW"/>
</dbReference>
<dbReference type="InterPro" id="IPR008896">
    <property type="entry name" value="TIC214"/>
</dbReference>
<dbReference type="PANTHER" id="PTHR33163:SF40">
    <property type="entry name" value="PROTEIN TIC 214"/>
    <property type="match status" value="1"/>
</dbReference>
<dbReference type="PANTHER" id="PTHR33163">
    <property type="entry name" value="PROTEIN TIC 214-RELATED"/>
    <property type="match status" value="1"/>
</dbReference>
<dbReference type="Pfam" id="PF05758">
    <property type="entry name" value="Ycf1"/>
    <property type="match status" value="1"/>
</dbReference>
<reference key="1">
    <citation type="journal article" date="2006" name="BMC Genomics">
        <title>The complete chloroplast genome sequence of Gossypium hirsutum: organization and phylogenetic relationships to other angiosperms.</title>
        <authorList>
            <person name="Lee S.-B."/>
            <person name="Kaittanis C."/>
            <person name="Jansen R.K."/>
            <person name="Hostetler J.B."/>
            <person name="Tallon L.J."/>
            <person name="Town C.D."/>
            <person name="Daniell H."/>
        </authorList>
    </citation>
    <scope>NUCLEOTIDE SEQUENCE [LARGE SCALE GENOMIC DNA]</scope>
    <source>
        <strain>cv. Coker 310FR</strain>
    </source>
</reference>
<reference key="2">
    <citation type="submission" date="2004-10" db="EMBL/GenBank/DDBJ databases">
        <title>Association of plastid genome with developing cotton fibers.</title>
        <authorList>
            <person name="Bashir A."/>
            <person name="Samad A."/>
        </authorList>
    </citation>
    <scope>NUCLEOTIDE SEQUENCE [GENOMIC DNA] OF 1298-1669</scope>
</reference>
<accession>Q2L951</accession>
<accession>Q5U724</accession>
<comment type="function">
    <text evidence="1">Involved in protein precursor import into chloroplasts. May be part of an intermediate translocation complex acting as a protein-conducting channel at the inner envelope.</text>
</comment>
<comment type="subunit">
    <text evidence="1">Part of the Tic complex.</text>
</comment>
<comment type="subcellular location">
    <subcellularLocation>
        <location evidence="1">Plastid</location>
        <location evidence="1">Chloroplast inner membrane</location>
        <topology evidence="2">Multi-pass membrane protein</topology>
    </subcellularLocation>
</comment>
<comment type="similarity">
    <text evidence="4">Belongs to the TIC214 family.</text>
</comment>
<keyword id="KW-0150">Chloroplast</keyword>
<keyword id="KW-0472">Membrane</keyword>
<keyword id="KW-0934">Plastid</keyword>
<keyword id="KW-1001">Plastid inner membrane</keyword>
<keyword id="KW-0653">Protein transport</keyword>
<keyword id="KW-1185">Reference proteome</keyword>
<keyword id="KW-0812">Transmembrane</keyword>
<keyword id="KW-1133">Transmembrane helix</keyword>
<keyword id="KW-0813">Transport</keyword>
<organism>
    <name type="scientific">Gossypium hirsutum</name>
    <name type="common">Upland cotton</name>
    <name type="synonym">Gossypium mexicanum</name>
    <dbReference type="NCBI Taxonomy" id="3635"/>
    <lineage>
        <taxon>Eukaryota</taxon>
        <taxon>Viridiplantae</taxon>
        <taxon>Streptophyta</taxon>
        <taxon>Embryophyta</taxon>
        <taxon>Tracheophyta</taxon>
        <taxon>Spermatophyta</taxon>
        <taxon>Magnoliopsida</taxon>
        <taxon>eudicotyledons</taxon>
        <taxon>Gunneridae</taxon>
        <taxon>Pentapetalae</taxon>
        <taxon>rosids</taxon>
        <taxon>malvids</taxon>
        <taxon>Malvales</taxon>
        <taxon>Malvaceae</taxon>
        <taxon>Malvoideae</taxon>
        <taxon>Gossypium</taxon>
    </lineage>
</organism>